<name>RDGC_ECOBW</name>
<reference key="1">
    <citation type="journal article" date="2009" name="J. Bacteriol.">
        <title>Genomic sequencing reveals regulatory mutations and recombinational events in the widely used MC4100 lineage of Escherichia coli K-12.</title>
        <authorList>
            <person name="Ferenci T."/>
            <person name="Zhou Z."/>
            <person name="Betteridge T."/>
            <person name="Ren Y."/>
            <person name="Liu Y."/>
            <person name="Feng L."/>
            <person name="Reeves P.R."/>
            <person name="Wang L."/>
        </authorList>
    </citation>
    <scope>NUCLEOTIDE SEQUENCE [LARGE SCALE GENOMIC DNA]</scope>
    <source>
        <strain>K12 / MC4100 / BW2952</strain>
    </source>
</reference>
<proteinExistence type="inferred from homology"/>
<evidence type="ECO:0000255" key="1">
    <source>
        <dbReference type="HAMAP-Rule" id="MF_00194"/>
    </source>
</evidence>
<comment type="function">
    <text evidence="1">May be involved in recombination.</text>
</comment>
<comment type="subcellular location">
    <subcellularLocation>
        <location evidence="1">Cytoplasm</location>
        <location evidence="1">Nucleoid</location>
    </subcellularLocation>
</comment>
<comment type="similarity">
    <text evidence="1">Belongs to the RdgC family.</text>
</comment>
<accession>C4ZTF1</accession>
<keyword id="KW-0963">Cytoplasm</keyword>
<keyword id="KW-0233">DNA recombination</keyword>
<sequence length="303" mass="33993">MLWFKNLMVYRLSREISLRAEEMEKQLASMAFTPCGSQDMAKMGWVPPMGSHSDALTHVANGQIVICARKEEKILPSPVIKQALEAKIAKLEAEQARKLKKTEKDSLKDEVLHSLLPRAFSRFSQTMMWIDTVNGLIMVDCASAKKAEDTLALLRKSLGSLPVVPLSMENPIELTLTEWVRSGSAAQGFQLLDEAELKSLLEDGGVIRAKKQDLTSEEITNHIEAGKVVTKLALDWQQRIQFVMCDDGSLKRLKFCDELRDQNEDIDREDFAQRFDADFILMTGELAALIQNLIEGLGGEAQR</sequence>
<feature type="chain" id="PRO_1000204024" description="Recombination-associated protein RdgC">
    <location>
        <begin position="1"/>
        <end position="303"/>
    </location>
</feature>
<gene>
    <name evidence="1" type="primary">rdgC</name>
    <name type="ordered locus">BWG_0276</name>
</gene>
<protein>
    <recommendedName>
        <fullName evidence="1">Recombination-associated protein RdgC</fullName>
    </recommendedName>
</protein>
<organism>
    <name type="scientific">Escherichia coli (strain K12 / MC4100 / BW2952)</name>
    <dbReference type="NCBI Taxonomy" id="595496"/>
    <lineage>
        <taxon>Bacteria</taxon>
        <taxon>Pseudomonadati</taxon>
        <taxon>Pseudomonadota</taxon>
        <taxon>Gammaproteobacteria</taxon>
        <taxon>Enterobacterales</taxon>
        <taxon>Enterobacteriaceae</taxon>
        <taxon>Escherichia</taxon>
    </lineage>
</organism>
<dbReference type="EMBL" id="CP001396">
    <property type="protein sequence ID" value="ACR62850.1"/>
    <property type="molecule type" value="Genomic_DNA"/>
</dbReference>
<dbReference type="RefSeq" id="WP_001298537.1">
    <property type="nucleotide sequence ID" value="NC_012759.1"/>
</dbReference>
<dbReference type="SMR" id="C4ZTF1"/>
<dbReference type="GeneID" id="75202816"/>
<dbReference type="KEGG" id="ebw:BWG_0276"/>
<dbReference type="HOGENOM" id="CLU_052038_1_1_6"/>
<dbReference type="GO" id="GO:0043590">
    <property type="term" value="C:bacterial nucleoid"/>
    <property type="evidence" value="ECO:0007669"/>
    <property type="project" value="TreeGrafter"/>
</dbReference>
<dbReference type="GO" id="GO:0005737">
    <property type="term" value="C:cytoplasm"/>
    <property type="evidence" value="ECO:0007669"/>
    <property type="project" value="UniProtKB-UniRule"/>
</dbReference>
<dbReference type="GO" id="GO:0003690">
    <property type="term" value="F:double-stranded DNA binding"/>
    <property type="evidence" value="ECO:0007669"/>
    <property type="project" value="TreeGrafter"/>
</dbReference>
<dbReference type="GO" id="GO:0006310">
    <property type="term" value="P:DNA recombination"/>
    <property type="evidence" value="ECO:0007669"/>
    <property type="project" value="UniProtKB-UniRule"/>
</dbReference>
<dbReference type="GO" id="GO:0000018">
    <property type="term" value="P:regulation of DNA recombination"/>
    <property type="evidence" value="ECO:0007669"/>
    <property type="project" value="TreeGrafter"/>
</dbReference>
<dbReference type="HAMAP" id="MF_00194">
    <property type="entry name" value="RdgC"/>
    <property type="match status" value="1"/>
</dbReference>
<dbReference type="InterPro" id="IPR007476">
    <property type="entry name" value="RdgC"/>
</dbReference>
<dbReference type="NCBIfam" id="NF001460">
    <property type="entry name" value="PRK00321.1-1"/>
    <property type="match status" value="1"/>
</dbReference>
<dbReference type="NCBIfam" id="NF001462">
    <property type="entry name" value="PRK00321.1-3"/>
    <property type="match status" value="1"/>
</dbReference>
<dbReference type="NCBIfam" id="NF001464">
    <property type="entry name" value="PRK00321.1-5"/>
    <property type="match status" value="1"/>
</dbReference>
<dbReference type="PANTHER" id="PTHR38103">
    <property type="entry name" value="RECOMBINATION-ASSOCIATED PROTEIN RDGC"/>
    <property type="match status" value="1"/>
</dbReference>
<dbReference type="PANTHER" id="PTHR38103:SF1">
    <property type="entry name" value="RECOMBINATION-ASSOCIATED PROTEIN RDGC"/>
    <property type="match status" value="1"/>
</dbReference>
<dbReference type="Pfam" id="PF04381">
    <property type="entry name" value="RdgC"/>
    <property type="match status" value="1"/>
</dbReference>